<dbReference type="EMBL" id="AY261363">
    <property type="status" value="NOT_ANNOTATED_CDS"/>
    <property type="molecule type" value="Genomic_DNA"/>
</dbReference>
<dbReference type="SMR" id="P0C9V8"/>
<dbReference type="Proteomes" id="UP000000859">
    <property type="component" value="Segment"/>
</dbReference>
<dbReference type="GO" id="GO:0044177">
    <property type="term" value="C:host cell Golgi apparatus"/>
    <property type="evidence" value="ECO:0007669"/>
    <property type="project" value="UniProtKB-SubCell"/>
</dbReference>
<dbReference type="GO" id="GO:0033644">
    <property type="term" value="C:host cell membrane"/>
    <property type="evidence" value="ECO:0007669"/>
    <property type="project" value="UniProtKB-SubCell"/>
</dbReference>
<dbReference type="GO" id="GO:0016020">
    <property type="term" value="C:membrane"/>
    <property type="evidence" value="ECO:0007669"/>
    <property type="project" value="UniProtKB-KW"/>
</dbReference>
<dbReference type="GO" id="GO:0055036">
    <property type="term" value="C:virion membrane"/>
    <property type="evidence" value="ECO:0007669"/>
    <property type="project" value="UniProtKB-SubCell"/>
</dbReference>
<dbReference type="Gene3D" id="2.60.40.10">
    <property type="entry name" value="Immunoglobulins"/>
    <property type="match status" value="1"/>
</dbReference>
<dbReference type="Gene3D" id="2.160.20.50">
    <property type="entry name" value="Insect antifreeze protein"/>
    <property type="match status" value="1"/>
</dbReference>
<dbReference type="InterPro" id="IPR036179">
    <property type="entry name" value="Ig-like_dom_sf"/>
</dbReference>
<dbReference type="InterPro" id="IPR013783">
    <property type="entry name" value="Ig-like_fold"/>
</dbReference>
<dbReference type="PRINTS" id="PR01217">
    <property type="entry name" value="PRICHEXTENSN"/>
</dbReference>
<dbReference type="SUPFAM" id="SSF48726">
    <property type="entry name" value="Immunoglobulin"/>
    <property type="match status" value="1"/>
</dbReference>
<name>CD2H_ASFP4</name>
<proteinExistence type="inferred from homology"/>
<keyword id="KW-1015">Disulfide bond</keyword>
<keyword id="KW-0325">Glycoprotein</keyword>
<keyword id="KW-1040">Host Golgi apparatus</keyword>
<keyword id="KW-1043">Host membrane</keyword>
<keyword id="KW-0426">Late protein</keyword>
<keyword id="KW-0472">Membrane</keyword>
<keyword id="KW-0675">Receptor</keyword>
<keyword id="KW-0677">Repeat</keyword>
<keyword id="KW-0732">Signal</keyword>
<keyword id="KW-0812">Transmembrane</keyword>
<keyword id="KW-1133">Transmembrane helix</keyword>
<keyword id="KW-0946">Virion</keyword>
<organism>
    <name type="scientific">African swine fever virus (isolate Tick/South Africa/Pretoriuskop Pr4/1996)</name>
    <name type="common">ASFV</name>
    <dbReference type="NCBI Taxonomy" id="561443"/>
    <lineage>
        <taxon>Viruses</taxon>
        <taxon>Varidnaviria</taxon>
        <taxon>Bamfordvirae</taxon>
        <taxon>Nucleocytoviricota</taxon>
        <taxon>Pokkesviricetes</taxon>
        <taxon>Asfuvirales</taxon>
        <taxon>Asfarviridae</taxon>
        <taxon>Asfivirus</taxon>
        <taxon>African swine fever virus</taxon>
    </lineage>
</organism>
<feature type="signal peptide" evidence="4">
    <location>
        <begin position="1"/>
        <end position="16"/>
    </location>
</feature>
<feature type="chain" id="PRO_0000373361" description="CD2 homolog">
    <location>
        <begin position="17"/>
        <end position="404"/>
    </location>
</feature>
<feature type="topological domain" description="Extracellular" evidence="4">
    <location>
        <begin position="17"/>
        <end position="225"/>
    </location>
</feature>
<feature type="transmembrane region" description="Helical" evidence="4">
    <location>
        <begin position="226"/>
        <end position="246"/>
    </location>
</feature>
<feature type="topological domain" description="Cytoplasmic" evidence="4">
    <location>
        <begin position="247"/>
        <end position="404"/>
    </location>
</feature>
<feature type="repeat" description="1">
    <location>
        <begin position="322"/>
        <end position="327"/>
    </location>
</feature>
<feature type="repeat" description="2">
    <location>
        <begin position="328"/>
        <end position="333"/>
    </location>
</feature>
<feature type="repeat" description="3">
    <location>
        <begin position="334"/>
        <end position="339"/>
    </location>
</feature>
<feature type="repeat" description="4">
    <location>
        <begin position="340"/>
        <end position="345"/>
    </location>
</feature>
<feature type="repeat" description="5">
    <location>
        <begin position="346"/>
        <end position="351"/>
    </location>
</feature>
<feature type="repeat" description="6">
    <location>
        <begin position="352"/>
        <end position="357"/>
    </location>
</feature>
<feature type="repeat" description="7">
    <location>
        <begin position="358"/>
        <end position="363"/>
    </location>
</feature>
<feature type="region of interest" description="Disordered" evidence="5">
    <location>
        <begin position="260"/>
        <end position="295"/>
    </location>
</feature>
<feature type="region of interest" description="7 X 6 AA tandem repeats of [KN]-P-C-P-P-P">
    <location>
        <begin position="322"/>
        <end position="363"/>
    </location>
</feature>
<feature type="region of interest" description="Disordered" evidence="5">
    <location>
        <begin position="357"/>
        <end position="390"/>
    </location>
</feature>
<feature type="compositionally biased region" description="Basic and acidic residues" evidence="5">
    <location>
        <begin position="273"/>
        <end position="287"/>
    </location>
</feature>
<feature type="compositionally biased region" description="Pro residues" evidence="5">
    <location>
        <begin position="357"/>
        <end position="388"/>
    </location>
</feature>
<feature type="glycosylation site" description="N-linked (GlcNAc...) asparagine; by host" evidence="4">
    <location>
        <position position="24"/>
    </location>
</feature>
<feature type="glycosylation site" description="N-linked (GlcNAc...) asparagine; by host" evidence="4">
    <location>
        <position position="87"/>
    </location>
</feature>
<feature type="glycosylation site" description="N-linked (GlcNAc...) asparagine; by host" evidence="4">
    <location>
        <position position="92"/>
    </location>
</feature>
<feature type="glycosylation site" description="N-linked (GlcNAc...) asparagine; by host" evidence="4">
    <location>
        <position position="96"/>
    </location>
</feature>
<feature type="glycosylation site" description="N-linked (GlcNAc...) asparagine; by host" evidence="4">
    <location>
        <position position="122"/>
    </location>
</feature>
<feature type="glycosylation site" description="N-linked (GlcNAc...) asparagine; by host" evidence="4">
    <location>
        <position position="139"/>
    </location>
</feature>
<feature type="glycosylation site" description="N-linked (GlcNAc...) asparagine; by host" evidence="4">
    <location>
        <position position="167"/>
    </location>
</feature>
<feature type="glycosylation site" description="N-linked (GlcNAc...) asparagine; by host" evidence="4">
    <location>
        <position position="193"/>
    </location>
</feature>
<feature type="glycosylation site" description="N-linked (GlcNAc...) asparagine; by host" evidence="4">
    <location>
        <position position="200"/>
    </location>
</feature>
<feature type="glycosylation site" description="N-linked (GlcNAc...) asparagine; by host" evidence="4">
    <location>
        <position position="206"/>
    </location>
</feature>
<feature type="disulfide bond" evidence="1">
    <location>
        <begin position="140"/>
        <end position="207"/>
    </location>
</feature>
<feature type="disulfide bond" evidence="1">
    <location>
        <begin position="147"/>
        <end position="190"/>
    </location>
</feature>
<gene>
    <name type="ordered locus">Pret-070</name>
</gene>
<accession>P0C9V8</accession>
<reference key="1">
    <citation type="submission" date="2003-03" db="EMBL/GenBank/DDBJ databases">
        <title>African swine fever virus genomes.</title>
        <authorList>
            <person name="Kutish G.F."/>
            <person name="Rock D.L."/>
        </authorList>
    </citation>
    <scope>NUCLEOTIDE SEQUENCE [LARGE SCALE GENOMIC DNA]</scope>
</reference>
<evidence type="ECO:0000250" key="1">
    <source>
        <dbReference type="UniProtKB" id="P06729"/>
    </source>
</evidence>
<evidence type="ECO:0000250" key="2">
    <source>
        <dbReference type="UniProtKB" id="P0C9V9"/>
    </source>
</evidence>
<evidence type="ECO:0000250" key="3">
    <source>
        <dbReference type="UniProtKB" id="Q89501"/>
    </source>
</evidence>
<evidence type="ECO:0000255" key="4"/>
<evidence type="ECO:0000256" key="5">
    <source>
        <dbReference type="SAM" id="MobiDB-lite"/>
    </source>
</evidence>
<evidence type="ECO:0000305" key="6"/>
<comment type="function">
    <text evidence="2 3">May play an immunosuppressive role by inhibiting lymphocyte proliferation and subsequently facilitating viral replication and generalization of infection (By similarity). Responsible for viral hemadsorption, which may help viral spread (By similarity). Increases virus replication in the tick vector at the step of virus uptake or replication in the tick gut (By similarity). May play a role in the host Golgi reorganization to yield viral factories (By similarity). May play a role in host cell penetration (By similarity).</text>
</comment>
<comment type="subunit">
    <text evidence="3">Both glycosylated and nonglycosylated forms interact (via C-terminus) with the host AP-1 complex.</text>
</comment>
<comment type="subcellular location">
    <subcellularLocation>
        <location evidence="2">Host membrane</location>
        <topology evidence="6">Single-pass type I membrane protein</topology>
    </subcellularLocation>
    <subcellularLocation>
        <location evidence="3">Virion membrane</location>
    </subcellularLocation>
    <subcellularLocation>
        <location evidence="3">Host Golgi apparatus</location>
    </subcellularLocation>
    <text evidence="2 3">Localizes around the cytoplasmic viral factories which are probably derived from the host Golgi membrane (By similarity). Both proteolytic fragments localize to membrane compartements (By similarity). A minor fraction localizes on the host plasma membrane and on the outer viral envelope of budding particles (By similarity).</text>
</comment>
<comment type="induction">
    <text evidence="6">Expressed in the late phase of the viral replicative cycle.</text>
</comment>
<comment type="domain">
    <text evidence="3">The C-terminus contains repetitive amino-acids that may function as a cell-penetrating peptide.</text>
</comment>
<comment type="PTM">
    <text evidence="2">Cleaved into two fragments of 63 kDa and 26 kDa containing respectively the glycosylated N-terminus and the nonglycosylated C-terminus (By similarity). A full-length 89-kDa glycosylated form also exists (By similarity).</text>
</comment>
<comment type="similarity">
    <text evidence="6">Belongs to the asfivirus CD2 homolog protein family.</text>
</comment>
<organismHost>
    <name type="scientific">Ornithodoros</name>
    <name type="common">relapsing fever ticks</name>
    <dbReference type="NCBI Taxonomy" id="6937"/>
</organismHost>
<organismHost>
    <name type="scientific">Phacochoerus aethiopicus</name>
    <name type="common">Warthog</name>
    <dbReference type="NCBI Taxonomy" id="85517"/>
</organismHost>
<organismHost>
    <name type="scientific">Phacochoerus africanus</name>
    <name type="common">Warthog</name>
    <dbReference type="NCBI Taxonomy" id="41426"/>
</organismHost>
<organismHost>
    <name type="scientific">Potamochoerus larvatus</name>
    <name type="common">Bushpig</name>
    <dbReference type="NCBI Taxonomy" id="273792"/>
</organismHost>
<organismHost>
    <name type="scientific">Sus scrofa</name>
    <name type="common">Pig</name>
    <dbReference type="NCBI Taxonomy" id="9823"/>
</organismHost>
<sequence>MFITLIFLSYINIVLSNNYWARLNETITLNSNITNDTNNELGIFWNSYNNTYYNNTFNNIAICGKKGIFCECNINYNTSISNTSISNTSIYNVTNNCSLTIFLYDDNIFKTYQLVYQNYKINYTINLLLPVTSPNITYNCTNSLITCEKNDGTNTNMFLSINNITINHTNQDILTYYWNNSEFNNFTATCMINNTLNSANTTKVINCTNPLLNSYQNYFLENIHTLFYIIIFIVSGLIASIFISIITFLSLRKRKKHVEEIESPPPESNEEEQCQHDDTTSIHEPSPREPLLPKPYSRYQYNTPIYYMRPSTQPLNPFPLPNPCPPPKPCPPPKPCPPPKPCPPPKPCPPPKPCPPPKPCPPPKPCSSPESYSPPKPLPSIPLLPNIPPLSTQNISLIHVDRII</sequence>
<protein>
    <recommendedName>
        <fullName>CD2 homolog</fullName>
        <shortName>CD2H</shortName>
    </recommendedName>
    <alternativeName>
        <fullName>5HL</fullName>
    </alternativeName>
    <alternativeName>
        <fullName>CD2v</fullName>
    </alternativeName>
    <alternativeName>
        <fullName>T-lymphocyte CD2 receptor-like protein</fullName>
        <shortName>CD2-like protein</shortName>
    </alternativeName>
    <alternativeName>
        <fullName evidence="3">pEP402R</fullName>
    </alternativeName>
</protein>